<name>RDGC_PSEP7</name>
<organism>
    <name type="scientific">Pseudomonas paraeruginosa (strain DSM 24068 / PA7)</name>
    <name type="common">Pseudomonas aeruginosa (strain PA7)</name>
    <dbReference type="NCBI Taxonomy" id="381754"/>
    <lineage>
        <taxon>Bacteria</taxon>
        <taxon>Pseudomonadati</taxon>
        <taxon>Pseudomonadota</taxon>
        <taxon>Gammaproteobacteria</taxon>
        <taxon>Pseudomonadales</taxon>
        <taxon>Pseudomonadaceae</taxon>
        <taxon>Pseudomonas</taxon>
        <taxon>Pseudomonas paraeruginosa</taxon>
    </lineage>
</organism>
<protein>
    <recommendedName>
        <fullName evidence="1">Recombination-associated protein RdgC</fullName>
    </recommendedName>
</protein>
<accession>A6V2F6</accession>
<dbReference type="EMBL" id="CP000744">
    <property type="protein sequence ID" value="ABR82650.1"/>
    <property type="molecule type" value="Genomic_DNA"/>
</dbReference>
<dbReference type="RefSeq" id="WP_012074955.1">
    <property type="nucleotide sequence ID" value="NC_009656.1"/>
</dbReference>
<dbReference type="SMR" id="A6V2F6"/>
<dbReference type="GeneID" id="77220212"/>
<dbReference type="KEGG" id="pap:PSPA7_1858"/>
<dbReference type="HOGENOM" id="CLU_052038_1_1_6"/>
<dbReference type="Proteomes" id="UP000001582">
    <property type="component" value="Chromosome"/>
</dbReference>
<dbReference type="GO" id="GO:0043590">
    <property type="term" value="C:bacterial nucleoid"/>
    <property type="evidence" value="ECO:0007669"/>
    <property type="project" value="TreeGrafter"/>
</dbReference>
<dbReference type="GO" id="GO:0005737">
    <property type="term" value="C:cytoplasm"/>
    <property type="evidence" value="ECO:0007669"/>
    <property type="project" value="UniProtKB-UniRule"/>
</dbReference>
<dbReference type="GO" id="GO:0003690">
    <property type="term" value="F:double-stranded DNA binding"/>
    <property type="evidence" value="ECO:0007669"/>
    <property type="project" value="TreeGrafter"/>
</dbReference>
<dbReference type="GO" id="GO:0006310">
    <property type="term" value="P:DNA recombination"/>
    <property type="evidence" value="ECO:0007669"/>
    <property type="project" value="UniProtKB-UniRule"/>
</dbReference>
<dbReference type="GO" id="GO:0000018">
    <property type="term" value="P:regulation of DNA recombination"/>
    <property type="evidence" value="ECO:0007669"/>
    <property type="project" value="TreeGrafter"/>
</dbReference>
<dbReference type="HAMAP" id="MF_00194">
    <property type="entry name" value="RdgC"/>
    <property type="match status" value="1"/>
</dbReference>
<dbReference type="InterPro" id="IPR007476">
    <property type="entry name" value="RdgC"/>
</dbReference>
<dbReference type="NCBIfam" id="NF001461">
    <property type="entry name" value="PRK00321.1-2"/>
    <property type="match status" value="1"/>
</dbReference>
<dbReference type="NCBIfam" id="NF001462">
    <property type="entry name" value="PRK00321.1-3"/>
    <property type="match status" value="1"/>
</dbReference>
<dbReference type="NCBIfam" id="NF001464">
    <property type="entry name" value="PRK00321.1-5"/>
    <property type="match status" value="1"/>
</dbReference>
<dbReference type="PANTHER" id="PTHR38103">
    <property type="entry name" value="RECOMBINATION-ASSOCIATED PROTEIN RDGC"/>
    <property type="match status" value="1"/>
</dbReference>
<dbReference type="PANTHER" id="PTHR38103:SF1">
    <property type="entry name" value="RECOMBINATION-ASSOCIATED PROTEIN RDGC"/>
    <property type="match status" value="1"/>
</dbReference>
<dbReference type="Pfam" id="PF04381">
    <property type="entry name" value="RdgC"/>
    <property type="match status" value="1"/>
</dbReference>
<reference key="1">
    <citation type="submission" date="2007-06" db="EMBL/GenBank/DDBJ databases">
        <authorList>
            <person name="Dodson R.J."/>
            <person name="Harkins D."/>
            <person name="Paulsen I.T."/>
        </authorList>
    </citation>
    <scope>NUCLEOTIDE SEQUENCE [LARGE SCALE GENOMIC DNA]</scope>
    <source>
        <strain>DSM 24068 / PA7</strain>
    </source>
</reference>
<gene>
    <name evidence="1" type="primary">rdgC</name>
    <name type="ordered locus">PSPA7_1858</name>
</gene>
<proteinExistence type="inferred from homology"/>
<feature type="chain" id="PRO_1000021217" description="Recombination-associated protein RdgC">
    <location>
        <begin position="1"/>
        <end position="306"/>
    </location>
</feature>
<comment type="function">
    <text evidence="1">May be involved in recombination.</text>
</comment>
<comment type="subcellular location">
    <subcellularLocation>
        <location evidence="1">Cytoplasm</location>
        <location evidence="1">Nucleoid</location>
    </subcellularLocation>
</comment>
<comment type="similarity">
    <text evidence="1">Belongs to the RdgC family.</text>
</comment>
<keyword id="KW-0963">Cytoplasm</keyword>
<keyword id="KW-0233">DNA recombination</keyword>
<evidence type="ECO:0000255" key="1">
    <source>
        <dbReference type="HAMAP-Rule" id="MF_00194"/>
    </source>
</evidence>
<sequence>MWFRNLLVYRLTQDLQLDADALEKALGEKPARPCASQELTTYGFTAPFGKGPDAPLVHVSQDFFLVSARKEERILPGSVVRDALKEKVDEIEAQQMRKVYKKERDQLKDEIVQTLLPRAFIRRSSTFAAIAPSLGLILVDSASAKKAEDLLSTLREALGSLPVRPLSVKVAPTATLTDWVKTQEAAGDFHVLDECELRDTHEDGGVVRCKRQDLTSEEIQLHLTAGKLVTQLSLAWSDKLSFVLDDKLAVKRLRFEDLLQEQAEKDGGEDALGQLDASFTLMMLTFAEFLPALFEALGGEEIPQGV</sequence>